<protein>
    <recommendedName>
        <fullName evidence="18">Adenylosuccinate lyase</fullName>
        <shortName evidence="18">ADSL</shortName>
        <shortName>ASL</shortName>
        <ecNumber evidence="10 12">4.3.2.2</ecNumber>
    </recommendedName>
    <alternativeName>
        <fullName evidence="19">Adenylosuccinase</fullName>
        <shortName>ASase</shortName>
    </alternativeName>
</protein>
<keyword id="KW-0002">3D-structure</keyword>
<keyword id="KW-0007">Acetylation</keyword>
<keyword id="KW-0025">Alternative splicing</keyword>
<keyword id="KW-0903">Direct protein sequencing</keyword>
<keyword id="KW-0225">Disease variant</keyword>
<keyword id="KW-0887">Epilepsy</keyword>
<keyword id="KW-1017">Isopeptide bond</keyword>
<keyword id="KW-0456">Lyase</keyword>
<keyword id="KW-1267">Proteomics identification</keyword>
<keyword id="KW-0658">Purine biosynthesis</keyword>
<keyword id="KW-1185">Reference proteome</keyword>
<keyword id="KW-0832">Ubl conjugation</keyword>
<reference key="1">
    <citation type="journal article" date="1993" name="Cytogenet. Cell Genet.">
        <title>Mapping of the human adenylosuccinate lyase (ADSL) gene to chromosome 22q13.1--&gt;q13.2.</title>
        <authorList>
            <person name="Fon E.A."/>
            <person name="Demczuk S."/>
            <person name="Delattre O."/>
            <person name="Thomas G."/>
            <person name="Rouleau G.A."/>
        </authorList>
    </citation>
    <scope>NUCLEOTIDE SEQUENCE [MRNA] (ISOFORM 1)</scope>
    <source>
        <tissue>Brain</tissue>
    </source>
</reference>
<reference key="2">
    <citation type="journal article" date="2000" name="Hum. Mol. Genet.">
        <title>Human adenylosuccinate lyase (ADSL), cloning and characterization of full-length cDNA and its isoform, gene structure and molecular basis for ADSL deficiency in six patients.</title>
        <authorList>
            <person name="Kmoch S."/>
            <person name="Hartmannova H."/>
            <person name="Stiburkova B."/>
            <person name="Krijt J."/>
            <person name="Zikanova M."/>
            <person name="Sebesta I."/>
        </authorList>
    </citation>
    <scope>NUCLEOTIDE SEQUENCE [MRNA] (ISOFORMS 1 AND 2)</scope>
    <scope>FUNCTION</scope>
    <scope>VARIANTS ADSLD VAL-3; HIS-114; GLN-190; CYS-194; ASN-268; HIS-426 AND ASN-430</scope>
    <source>
        <tissue>Skeletal muscle</tissue>
    </source>
</reference>
<reference key="3">
    <citation type="journal article" date="2004" name="Genome Biol.">
        <title>A genome annotation-driven approach to cloning the human ORFeome.</title>
        <authorList>
            <person name="Collins J.E."/>
            <person name="Wright C.L."/>
            <person name="Edwards C.A."/>
            <person name="Davis M.P."/>
            <person name="Grinham J.A."/>
            <person name="Cole C.G."/>
            <person name="Goward M.E."/>
            <person name="Aguado B."/>
            <person name="Mallya M."/>
            <person name="Mokrab Y."/>
            <person name="Huckle E.J."/>
            <person name="Beare D.M."/>
            <person name="Dunham I."/>
        </authorList>
    </citation>
    <scope>NUCLEOTIDE SEQUENCE [LARGE SCALE MRNA] (ISOFORM 2)</scope>
</reference>
<reference key="4">
    <citation type="journal article" date="1999" name="Nature">
        <title>The DNA sequence of human chromosome 22.</title>
        <authorList>
            <person name="Dunham I."/>
            <person name="Hunt A.R."/>
            <person name="Collins J.E."/>
            <person name="Bruskiewich R."/>
            <person name="Beare D.M."/>
            <person name="Clamp M."/>
            <person name="Smink L.J."/>
            <person name="Ainscough R."/>
            <person name="Almeida J.P."/>
            <person name="Babbage A.K."/>
            <person name="Bagguley C."/>
            <person name="Bailey J."/>
            <person name="Barlow K.F."/>
            <person name="Bates K.N."/>
            <person name="Beasley O.P."/>
            <person name="Bird C.P."/>
            <person name="Blakey S.E."/>
            <person name="Bridgeman A.M."/>
            <person name="Buck D."/>
            <person name="Burgess J."/>
            <person name="Burrill W.D."/>
            <person name="Burton J."/>
            <person name="Carder C."/>
            <person name="Carter N.P."/>
            <person name="Chen Y."/>
            <person name="Clark G."/>
            <person name="Clegg S.M."/>
            <person name="Cobley V.E."/>
            <person name="Cole C.G."/>
            <person name="Collier R.E."/>
            <person name="Connor R."/>
            <person name="Conroy D."/>
            <person name="Corby N.R."/>
            <person name="Coville G.J."/>
            <person name="Cox A.V."/>
            <person name="Davis J."/>
            <person name="Dawson E."/>
            <person name="Dhami P.D."/>
            <person name="Dockree C."/>
            <person name="Dodsworth S.J."/>
            <person name="Durbin R.M."/>
            <person name="Ellington A.G."/>
            <person name="Evans K.L."/>
            <person name="Fey J.M."/>
            <person name="Fleming K."/>
            <person name="French L."/>
            <person name="Garner A.A."/>
            <person name="Gilbert J.G.R."/>
            <person name="Goward M.E."/>
            <person name="Grafham D.V."/>
            <person name="Griffiths M.N.D."/>
            <person name="Hall C."/>
            <person name="Hall R.E."/>
            <person name="Hall-Tamlyn G."/>
            <person name="Heathcott R.W."/>
            <person name="Ho S."/>
            <person name="Holmes S."/>
            <person name="Hunt S.E."/>
            <person name="Jones M.C."/>
            <person name="Kershaw J."/>
            <person name="Kimberley A.M."/>
            <person name="King A."/>
            <person name="Laird G.K."/>
            <person name="Langford C.F."/>
            <person name="Leversha M.A."/>
            <person name="Lloyd C."/>
            <person name="Lloyd D.M."/>
            <person name="Martyn I.D."/>
            <person name="Mashreghi-Mohammadi M."/>
            <person name="Matthews L.H."/>
            <person name="Mccann O.T."/>
            <person name="Mcclay J."/>
            <person name="Mclaren S."/>
            <person name="McMurray A.A."/>
            <person name="Milne S.A."/>
            <person name="Mortimore B.J."/>
            <person name="Odell C.N."/>
            <person name="Pavitt R."/>
            <person name="Pearce A.V."/>
            <person name="Pearson D."/>
            <person name="Phillimore B.J.C.T."/>
            <person name="Phillips S.H."/>
            <person name="Plumb R.W."/>
            <person name="Ramsay H."/>
            <person name="Ramsey Y."/>
            <person name="Rogers L."/>
            <person name="Ross M.T."/>
            <person name="Scott C.E."/>
            <person name="Sehra H.K."/>
            <person name="Skuce C.D."/>
            <person name="Smalley S."/>
            <person name="Smith M.L."/>
            <person name="Soderlund C."/>
            <person name="Spragon L."/>
            <person name="Steward C.A."/>
            <person name="Sulston J.E."/>
            <person name="Swann R.M."/>
            <person name="Vaudin M."/>
            <person name="Wall M."/>
            <person name="Wallis J.M."/>
            <person name="Whiteley M.N."/>
            <person name="Willey D.L."/>
            <person name="Williams L."/>
            <person name="Williams S.A."/>
            <person name="Williamson H."/>
            <person name="Wilmer T.E."/>
            <person name="Wilming L."/>
            <person name="Wright C.L."/>
            <person name="Hubbard T."/>
            <person name="Bentley D.R."/>
            <person name="Beck S."/>
            <person name="Rogers J."/>
            <person name="Shimizu N."/>
            <person name="Minoshima S."/>
            <person name="Kawasaki K."/>
            <person name="Sasaki T."/>
            <person name="Asakawa S."/>
            <person name="Kudoh J."/>
            <person name="Shintani A."/>
            <person name="Shibuya K."/>
            <person name="Yoshizaki Y."/>
            <person name="Aoki N."/>
            <person name="Mitsuyama S."/>
            <person name="Roe B.A."/>
            <person name="Chen F."/>
            <person name="Chu L."/>
            <person name="Crabtree J."/>
            <person name="Deschamps S."/>
            <person name="Do A."/>
            <person name="Do T."/>
            <person name="Dorman A."/>
            <person name="Fang F."/>
            <person name="Fu Y."/>
            <person name="Hu P."/>
            <person name="Hua A."/>
            <person name="Kenton S."/>
            <person name="Lai H."/>
            <person name="Lao H.I."/>
            <person name="Lewis J."/>
            <person name="Lewis S."/>
            <person name="Lin S.-P."/>
            <person name="Loh P."/>
            <person name="Malaj E."/>
            <person name="Nguyen T."/>
            <person name="Pan H."/>
            <person name="Phan S."/>
            <person name="Qi S."/>
            <person name="Qian Y."/>
            <person name="Ray L."/>
            <person name="Ren Q."/>
            <person name="Shaull S."/>
            <person name="Sloan D."/>
            <person name="Song L."/>
            <person name="Wang Q."/>
            <person name="Wang Y."/>
            <person name="Wang Z."/>
            <person name="White J."/>
            <person name="Willingham D."/>
            <person name="Wu H."/>
            <person name="Yao Z."/>
            <person name="Zhan M."/>
            <person name="Zhang G."/>
            <person name="Chissoe S."/>
            <person name="Murray J."/>
            <person name="Miller N."/>
            <person name="Minx P."/>
            <person name="Fulton R."/>
            <person name="Johnson D."/>
            <person name="Bemis G."/>
            <person name="Bentley D."/>
            <person name="Bradshaw H."/>
            <person name="Bourne S."/>
            <person name="Cordes M."/>
            <person name="Du Z."/>
            <person name="Fulton L."/>
            <person name="Goela D."/>
            <person name="Graves T."/>
            <person name="Hawkins J."/>
            <person name="Hinds K."/>
            <person name="Kemp K."/>
            <person name="Latreille P."/>
            <person name="Layman D."/>
            <person name="Ozersky P."/>
            <person name="Rohlfing T."/>
            <person name="Scheet P."/>
            <person name="Walker C."/>
            <person name="Wamsley A."/>
            <person name="Wohldmann P."/>
            <person name="Pepin K."/>
            <person name="Nelson J."/>
            <person name="Korf I."/>
            <person name="Bedell J.A."/>
            <person name="Hillier L.W."/>
            <person name="Mardis E."/>
            <person name="Waterston R."/>
            <person name="Wilson R."/>
            <person name="Emanuel B.S."/>
            <person name="Shaikh T."/>
            <person name="Kurahashi H."/>
            <person name="Saitta S."/>
            <person name="Budarf M.L."/>
            <person name="McDermid H.E."/>
            <person name="Johnson A."/>
            <person name="Wong A.C.C."/>
            <person name="Morrow B.E."/>
            <person name="Edelmann L."/>
            <person name="Kim U.J."/>
            <person name="Shizuya H."/>
            <person name="Simon M.I."/>
            <person name="Dumanski J.P."/>
            <person name="Peyrard M."/>
            <person name="Kedra D."/>
            <person name="Seroussi E."/>
            <person name="Fransson I."/>
            <person name="Tapia I."/>
            <person name="Bruder C.E."/>
            <person name="O'Brien K.P."/>
            <person name="Wilkinson P."/>
            <person name="Bodenteich A."/>
            <person name="Hartman K."/>
            <person name="Hu X."/>
            <person name="Khan A.S."/>
            <person name="Lane L."/>
            <person name="Tilahun Y."/>
            <person name="Wright H."/>
        </authorList>
    </citation>
    <scope>NUCLEOTIDE SEQUENCE [LARGE SCALE GENOMIC DNA]</scope>
</reference>
<reference key="5">
    <citation type="submission" date="2005-07" db="EMBL/GenBank/DDBJ databases">
        <authorList>
            <person name="Mural R.J."/>
            <person name="Istrail S."/>
            <person name="Sutton G.G."/>
            <person name="Florea L."/>
            <person name="Halpern A.L."/>
            <person name="Mobarry C.M."/>
            <person name="Lippert R."/>
            <person name="Walenz B."/>
            <person name="Shatkay H."/>
            <person name="Dew I."/>
            <person name="Miller J.R."/>
            <person name="Flanigan M.J."/>
            <person name="Edwards N.J."/>
            <person name="Bolanos R."/>
            <person name="Fasulo D."/>
            <person name="Halldorsson B.V."/>
            <person name="Hannenhalli S."/>
            <person name="Turner R."/>
            <person name="Yooseph S."/>
            <person name="Lu F."/>
            <person name="Nusskern D.R."/>
            <person name="Shue B.C."/>
            <person name="Zheng X.H."/>
            <person name="Zhong F."/>
            <person name="Delcher A.L."/>
            <person name="Huson D.H."/>
            <person name="Kravitz S.A."/>
            <person name="Mouchard L."/>
            <person name="Reinert K."/>
            <person name="Remington K.A."/>
            <person name="Clark A.G."/>
            <person name="Waterman M.S."/>
            <person name="Eichler E.E."/>
            <person name="Adams M.D."/>
            <person name="Hunkapiller M.W."/>
            <person name="Myers E.W."/>
            <person name="Venter J.C."/>
        </authorList>
    </citation>
    <scope>NUCLEOTIDE SEQUENCE [LARGE SCALE GENOMIC DNA]</scope>
</reference>
<reference key="6">
    <citation type="journal article" date="2004" name="Genome Res.">
        <title>The status, quality, and expansion of the NIH full-length cDNA project: the Mammalian Gene Collection (MGC).</title>
        <authorList>
            <consortium name="The MGC Project Team"/>
        </authorList>
    </citation>
    <scope>NUCLEOTIDE SEQUENCE [LARGE SCALE MRNA] (ISOFORM 1)</scope>
    <source>
        <tissue>Eye</tissue>
    </source>
</reference>
<reference key="7">
    <citation type="journal article" date="1992" name="Nat. Genet.">
        <title>A mutation in adenylosuccinate lyase associated with mental retardation and autistic features.</title>
        <authorList>
            <person name="Stone R.L."/>
            <person name="Aimi J."/>
            <person name="Barshop B.A."/>
            <person name="Jaeken J."/>
            <person name="van den Berghe G."/>
            <person name="Zalkin H."/>
            <person name="Dixon J.E."/>
        </authorList>
    </citation>
    <scope>NUCLEOTIDE SEQUENCE [MRNA] OF 2-484 (ISOFORM 1)</scope>
    <scope>VARIANT ADSLD PRO-438</scope>
</reference>
<reference key="8">
    <citation type="submission" date="2009-06" db="UniProtKB">
        <authorList>
            <person name="Bienvenut W.V."/>
            <person name="Ramsay A."/>
            <person name="Leung H.Y."/>
        </authorList>
    </citation>
    <scope>PROTEIN SEQUENCE OF 2-20 AND 235-245</scope>
    <scope>CLEAVAGE OF INITIATOR METHIONINE</scope>
    <scope>ACETYLATION AT ALA-2</scope>
    <scope>IDENTIFICATION BY MASS SPECTROMETRY</scope>
    <source>
        <tissue>Embryonic kidney</tissue>
    </source>
</reference>
<reference key="9">
    <citation type="journal article" date="2007" name="Protein Expr. Purif.">
        <title>Expression, purification, and characterization of stable, recombinant human adenylosuccinate lyase.</title>
        <authorList>
            <person name="Lee P."/>
            <person name="Colman R.F."/>
        </authorList>
    </citation>
    <scope>CATALYTIC ACTIVITY</scope>
    <scope>SUBUNIT</scope>
</reference>
<reference key="10">
    <citation type="journal article" date="2009" name="Science">
        <title>Lysine acetylation targets protein complexes and co-regulates major cellular functions.</title>
        <authorList>
            <person name="Choudhary C."/>
            <person name="Kumar C."/>
            <person name="Gnad F."/>
            <person name="Nielsen M.L."/>
            <person name="Rehman M."/>
            <person name="Walther T.C."/>
            <person name="Olsen J.V."/>
            <person name="Mann M."/>
        </authorList>
    </citation>
    <scope>ACETYLATION [LARGE SCALE ANALYSIS] AT LYS-147 AND LYS-295</scope>
    <scope>IDENTIFICATION BY MASS SPECTROMETRY [LARGE SCALE ANALYSIS]</scope>
</reference>
<reference key="11">
    <citation type="journal article" date="2011" name="BMC Syst. Biol.">
        <title>Initial characterization of the human central proteome.</title>
        <authorList>
            <person name="Burkard T.R."/>
            <person name="Planyavsky M."/>
            <person name="Kaupe I."/>
            <person name="Breitwieser F.P."/>
            <person name="Buerckstuemmer T."/>
            <person name="Bennett K.L."/>
            <person name="Superti-Furga G."/>
            <person name="Colinge J."/>
        </authorList>
    </citation>
    <scope>IDENTIFICATION BY MASS SPECTROMETRY [LARGE SCALE ANALYSIS]</scope>
</reference>
<reference key="12">
    <citation type="journal article" date="2014" name="J. Proteomics">
        <title>An enzyme assisted RP-RPLC approach for in-depth analysis of human liver phosphoproteome.</title>
        <authorList>
            <person name="Bian Y."/>
            <person name="Song C."/>
            <person name="Cheng K."/>
            <person name="Dong M."/>
            <person name="Wang F."/>
            <person name="Huang J."/>
            <person name="Sun D."/>
            <person name="Wang L."/>
            <person name="Ye M."/>
            <person name="Zou H."/>
        </authorList>
    </citation>
    <scope>IDENTIFICATION BY MASS SPECTROMETRY [LARGE SCALE ANALYSIS]</scope>
    <source>
        <tissue>Liver</tissue>
    </source>
</reference>
<reference key="13">
    <citation type="journal article" date="2014" name="Proc. Natl. Acad. Sci. U.S.A.">
        <title>Mapping of SUMO sites and analysis of SUMOylation changes induced by external stimuli.</title>
        <authorList>
            <person name="Impens F."/>
            <person name="Radoshevich L."/>
            <person name="Cossart P."/>
            <person name="Ribet D."/>
        </authorList>
    </citation>
    <scope>SUMOYLATION [LARGE SCALE ANALYSIS] AT LYS-415</scope>
    <scope>IDENTIFICATION BY MASS SPECTROMETRY [LARGE SCALE ANALYSIS]</scope>
</reference>
<reference key="14">
    <citation type="submission" date="2007-09" db="PDB data bank">
        <title>Human adenylosuccinate lyase in complex with its substrate N6-(1,2-dicarboxyethyl)-AMP, and its products AMP and fumarate.</title>
        <authorList>
            <consortium name="Structural genomics consortium (SGC)"/>
        </authorList>
    </citation>
    <scope>X-RAY CRYSTALLOGRAPHY (1.80 ANGSTROMS) IN COMPLEXES WITH SUBSTRATE; FUMARATE AND AMP</scope>
</reference>
<reference key="15">
    <citation type="journal article" date="2012" name="Biochemistry">
        <title>Structural and biochemical characterization of human adenylosuccinate lyase (ADSL) and the R303C ADSL deficiency-associated mutation.</title>
        <authorList>
            <person name="Ray S.P."/>
            <person name="Deaton M.K."/>
            <person name="Capodagli G.C."/>
            <person name="Calkins L.A."/>
            <person name="Sawle L."/>
            <person name="Ghosh K."/>
            <person name="Patterson D."/>
            <person name="Pegan S.D."/>
        </authorList>
    </citation>
    <scope>X-RAY CRYSTALLOGRAPHY (2.6 ANGSTROMS) OF WILD-TYPE AND VARIANT ADSLD CYS-303</scope>
    <scope>CATALYTIC ACTIVITY</scope>
    <scope>CHARACTERIZATION OF VARIANT ADSLD CYS-303</scope>
    <scope>ACTIVE SITE</scope>
    <scope>ACTIVITY REGULATION</scope>
    <scope>SUBUNIT</scope>
</reference>
<reference key="16">
    <citation type="journal article" date="1997" name="J. Inherit. Metab. Dis.">
        <title>Adenylosuccinase deficiency presenting with epilepsy in early infancy.</title>
        <authorList>
            <person name="Maaswinkel-Mooij P.D."/>
            <person name="Laan L.A.E.M."/>
            <person name="Onkenhout W."/>
            <person name="Brouwer O.F."/>
            <person name="Jaeken J."/>
            <person name="Poorthuis B.J.H.M."/>
        </authorList>
    </citation>
    <scope>VARIANT ADSLD HIS-426</scope>
</reference>
<reference key="17">
    <citation type="journal article" date="1998" name="Biochim. Biophys. Acta">
        <title>Identification of new mutations in the adenylosuccinate lyase gene associated with impaired enzyme activity in lymphocytes and red blood cells.</title>
        <authorList>
            <person name="Verginelli D."/>
            <person name="Luckow B."/>
            <person name="Crifo C."/>
            <person name="Salerno C."/>
            <person name="Gross M."/>
        </authorList>
    </citation>
    <scope>VARIANTS ADSLD ALA-100 AND TYR-422</scope>
</reference>
<reference key="18">
    <citation type="journal article" date="1999" name="Hum. Mutat.">
        <title>Mutation analysis in adenylosuccinate lyase deficiency: eight novel mutations in the re-evaluated full ADSL coding sequence.</title>
        <authorList>
            <person name="Marie S."/>
            <person name="Cuppens H."/>
            <person name="Heuterspreute M."/>
            <person name="Jaspers M."/>
            <person name="Tola E.Z."/>
            <person name="Gu X.X."/>
            <person name="Legius E."/>
            <person name="Vincent M.-F."/>
            <person name="Jaeken J."/>
            <person name="Cassiman J.-J."/>
            <person name="van den Berghe G."/>
        </authorList>
    </citation>
    <scope>VARIANTS ADSLD VAL-72; TRP-141; GLN-190; GLU-246; CYS-303; ARG-395 AND HIS-426</scope>
</reference>
<reference key="19">
    <citation type="journal article" date="2000" name="Hum. Mol. Genet.">
        <title>Clinical, biochemical and molecular genetic correlations in adenylosuccinate lyase deficiency.</title>
        <authorList>
            <person name="Race V."/>
            <person name="Marie S."/>
            <person name="Vincent M.-F."/>
            <person name="Van den Berghe G."/>
        </authorList>
    </citation>
    <scope>CHARACTERIZATION OF VARIANTS ADSLD VAL-2; LEU-26; TRP-141; CYS-303; ARG-395; HIS-426 AND SER-450</scope>
</reference>
<reference key="20">
    <citation type="journal article" date="2002" name="Am. J. Hum. Genet.">
        <title>Mutation of a nuclear respiratory factor 2 binding site in the 5' untranslated region of the ADSL gene in three patients with adenylosuccinate lyase deficiency.</title>
        <authorList>
            <person name="Marie S."/>
            <person name="Race V."/>
            <person name="Nassogne M.C."/>
            <person name="Vincent M.F."/>
            <person name="Van den Berghe G."/>
        </authorList>
    </citation>
    <scope>VARIANTS ADSLD LEU-318 AND PRO-447</scope>
</reference>
<reference key="21">
    <citation type="journal article" date="2002" name="J. Med. Genet.">
        <title>Towards a suggestive facial dysmorphism in adenylosuccinate lyase deficiency?</title>
        <authorList>
            <person name="Holder-Espinasse M."/>
            <person name="Marie S."/>
            <person name="Bourrouillou G."/>
            <person name="Ceballos-Picot I."/>
            <person name="Nassogne M.C."/>
            <person name="Faivre L."/>
            <person name="Amiel J."/>
            <person name="Munnich A."/>
            <person name="Vincent M.F."/>
            <person name="Cormier-Daire V."/>
        </authorList>
    </citation>
    <scope>VARIANT ADSLD TRP-374</scope>
</reference>
<reference key="22">
    <citation type="journal article" date="2002" name="Neuropediatrics">
        <title>Screening for adenylosuccinate lyase deficiency: clinical, biochemical and molecular findings in four patients.</title>
        <authorList>
            <person name="Castro M."/>
            <person name="Perez-Cerda C."/>
            <person name="Merinero B."/>
            <person name="Garcia M.J."/>
            <person name="Bernar J."/>
            <person name="Gil Nagel A."/>
            <person name="Torres J."/>
            <person name="Bermudez M."/>
            <person name="Garavito P."/>
            <person name="Marie S."/>
            <person name="Vincent F."/>
            <person name="Van den Berghe G."/>
            <person name="Ugarte M."/>
        </authorList>
    </citation>
    <scope>VARIANTS ADSLD VAL-311; MET-364; HIS-396 AND PRO-452</scope>
</reference>
<reference key="23">
    <citation type="journal article" date="2003" name="Am. J. Med. Genet. A">
        <title>Intrafamilial variability in the phenotypic expression of adenylosuccinate lyase deficiency: a report on three patients.</title>
        <authorList>
            <person name="Edery P."/>
            <person name="Chabrier S."/>
            <person name="Ceballos-Picot I."/>
            <person name="Marie S."/>
            <person name="Vincent M.-F."/>
            <person name="Tardieu M."/>
        </authorList>
    </citation>
    <scope>VARIANT ADSLD HIS-426</scope>
</reference>
<reference key="24">
    <citation type="journal article" date="2006" name="Mol. Genet. Metab.">
        <title>Adenylosuccinate lyase deficiency.</title>
        <authorList>
            <person name="Spiegel E.K."/>
            <person name="Colman R.F."/>
            <person name="Patterson D."/>
        </authorList>
    </citation>
    <scope>VARIANT ADSLD VAL-423</scope>
</reference>
<reference key="25">
    <citation type="journal article" date="2009" name="Biochemistry">
        <title>Biochemical and biophysical analysis of five disease-associated human adenylosuccinate lyase mutants.</title>
        <authorList>
            <person name="Ariyananda Lde Z."/>
            <person name="Lee P."/>
            <person name="Antonopoulos C."/>
            <person name="Colman R.F."/>
        </authorList>
    </citation>
    <scope>CHARACTERIZATION OF VARIANTS ADSLD CYS-194; GLU-246; VAL-311; CYS-396 AND HIS-396</scope>
    <scope>ACTIVITY REGULATION</scope>
</reference>
<proteinExistence type="evidence at protein level"/>
<dbReference type="EC" id="4.3.2.2" evidence="10 12"/>
<dbReference type="EMBL" id="X65867">
    <property type="protein sequence ID" value="CAA46696.1"/>
    <property type="molecule type" value="mRNA"/>
</dbReference>
<dbReference type="EMBL" id="X65867">
    <property type="protein sequence ID" value="CAA46697.1"/>
    <property type="status" value="ALT_INIT"/>
    <property type="molecule type" value="mRNA"/>
</dbReference>
<dbReference type="EMBL" id="AF067853">
    <property type="protein sequence ID" value="AAC21560.1"/>
    <property type="molecule type" value="mRNA"/>
</dbReference>
<dbReference type="EMBL" id="AF067854">
    <property type="protein sequence ID" value="AAC21561.1"/>
    <property type="molecule type" value="mRNA"/>
</dbReference>
<dbReference type="EMBL" id="CR456368">
    <property type="protein sequence ID" value="CAG30254.1"/>
    <property type="molecule type" value="mRNA"/>
</dbReference>
<dbReference type="EMBL" id="AL022238">
    <property type="status" value="NOT_ANNOTATED_CDS"/>
    <property type="molecule type" value="Genomic_DNA"/>
</dbReference>
<dbReference type="EMBL" id="CH471095">
    <property type="protein sequence ID" value="EAW60375.1"/>
    <property type="molecule type" value="Genomic_DNA"/>
</dbReference>
<dbReference type="EMBL" id="BC000253">
    <property type="protein sequence ID" value="AAH00253.1"/>
    <property type="molecule type" value="mRNA"/>
</dbReference>
<dbReference type="EMBL" id="S60710">
    <property type="protein sequence ID" value="AAC60603.1"/>
    <property type="status" value="ALT_INIT"/>
    <property type="molecule type" value="mRNA"/>
</dbReference>
<dbReference type="CCDS" id="CCDS14001.1">
    <molecule id="P30566-1"/>
</dbReference>
<dbReference type="CCDS" id="CCDS46714.1">
    <molecule id="P30566-2"/>
</dbReference>
<dbReference type="RefSeq" id="NP_000017.1">
    <molecule id="P30566-1"/>
    <property type="nucleotide sequence ID" value="NM_000026.4"/>
</dbReference>
<dbReference type="RefSeq" id="NP_001116850.1">
    <molecule id="P30566-2"/>
    <property type="nucleotide sequence ID" value="NM_001123378.3"/>
</dbReference>
<dbReference type="RefSeq" id="NP_001304852.1">
    <property type="nucleotide sequence ID" value="NM_001317923.1"/>
</dbReference>
<dbReference type="PDB" id="2J91">
    <property type="method" value="X-ray"/>
    <property type="resolution" value="1.80 A"/>
    <property type="chains" value="A/B/C/D=1-481"/>
</dbReference>
<dbReference type="PDB" id="2VD6">
    <property type="method" value="X-ray"/>
    <property type="resolution" value="2.00 A"/>
    <property type="chains" value="A/B/C/D=1-481"/>
</dbReference>
<dbReference type="PDB" id="4FFX">
    <property type="method" value="X-ray"/>
    <property type="resolution" value="2.70 A"/>
    <property type="chains" value="A/B/C/D=1-484"/>
</dbReference>
<dbReference type="PDB" id="4FLC">
    <property type="method" value="X-ray"/>
    <property type="resolution" value="2.60 A"/>
    <property type="chains" value="A/B/C/D=1-484"/>
</dbReference>
<dbReference type="PDBsum" id="2J91"/>
<dbReference type="PDBsum" id="2VD6"/>
<dbReference type="PDBsum" id="4FFX"/>
<dbReference type="PDBsum" id="4FLC"/>
<dbReference type="SASBDB" id="P30566"/>
<dbReference type="SMR" id="P30566"/>
<dbReference type="BioGRID" id="106667">
    <property type="interactions" value="299"/>
</dbReference>
<dbReference type="FunCoup" id="P30566">
    <property type="interactions" value="1898"/>
</dbReference>
<dbReference type="IntAct" id="P30566">
    <property type="interactions" value="56"/>
</dbReference>
<dbReference type="MINT" id="P30566"/>
<dbReference type="STRING" id="9606.ENSP00000485525"/>
<dbReference type="GlyGen" id="P30566">
    <property type="glycosylation" value="1 site, 1 O-linked glycan (1 site)"/>
</dbReference>
<dbReference type="iPTMnet" id="P30566"/>
<dbReference type="PhosphoSitePlus" id="P30566"/>
<dbReference type="SwissPalm" id="P30566"/>
<dbReference type="BioMuta" id="ADSL"/>
<dbReference type="DMDM" id="6686318"/>
<dbReference type="jPOST" id="P30566"/>
<dbReference type="MassIVE" id="P30566"/>
<dbReference type="PaxDb" id="9606-ENSP00000485525"/>
<dbReference type="PeptideAtlas" id="P30566"/>
<dbReference type="ProteomicsDB" id="54723">
    <molecule id="P30566-1"/>
</dbReference>
<dbReference type="ProteomicsDB" id="54724">
    <molecule id="P30566-2"/>
</dbReference>
<dbReference type="Pumba" id="P30566"/>
<dbReference type="Antibodypedia" id="34889">
    <property type="antibodies" value="249 antibodies from 27 providers"/>
</dbReference>
<dbReference type="DNASU" id="158"/>
<dbReference type="Ensembl" id="ENST00000342312.9">
    <molecule id="P30566-2"/>
    <property type="protein sequence ID" value="ENSP00000341429.6"/>
    <property type="gene ID" value="ENSG00000239900.14"/>
</dbReference>
<dbReference type="Ensembl" id="ENST00000623063.3">
    <molecule id="P30566-1"/>
    <property type="protein sequence ID" value="ENSP00000485525.1"/>
    <property type="gene ID" value="ENSG00000239900.14"/>
</dbReference>
<dbReference type="GeneID" id="158"/>
<dbReference type="KEGG" id="hsa:158"/>
<dbReference type="MANE-Select" id="ENST00000623063.3">
    <property type="protein sequence ID" value="ENSP00000485525.1"/>
    <property type="RefSeq nucleotide sequence ID" value="NM_000026.4"/>
    <property type="RefSeq protein sequence ID" value="NP_000017.1"/>
</dbReference>
<dbReference type="UCSC" id="uc003ays.5">
    <molecule id="P30566-1"/>
    <property type="organism name" value="human"/>
</dbReference>
<dbReference type="AGR" id="HGNC:291"/>
<dbReference type="CTD" id="158"/>
<dbReference type="DisGeNET" id="158"/>
<dbReference type="GeneCards" id="ADSL"/>
<dbReference type="HGNC" id="HGNC:291">
    <property type="gene designation" value="ADSL"/>
</dbReference>
<dbReference type="HPA" id="ENSG00000239900">
    <property type="expression patterns" value="Group enriched (skeletal muscle, tongue)"/>
</dbReference>
<dbReference type="MalaCards" id="ADSL"/>
<dbReference type="MIM" id="103050">
    <property type="type" value="phenotype"/>
</dbReference>
<dbReference type="MIM" id="608222">
    <property type="type" value="gene"/>
</dbReference>
<dbReference type="neXtProt" id="NX_P30566"/>
<dbReference type="OpenTargets" id="ENSG00000239900"/>
<dbReference type="Orphanet" id="46">
    <property type="disease" value="Adenylosuccinate lyase deficiency"/>
</dbReference>
<dbReference type="PharmGKB" id="PA24600"/>
<dbReference type="VEuPathDB" id="HostDB:ENSG00000239900"/>
<dbReference type="eggNOG" id="KOG2700">
    <property type="taxonomic scope" value="Eukaryota"/>
</dbReference>
<dbReference type="GeneTree" id="ENSGT00950000183122"/>
<dbReference type="HOGENOM" id="CLU_030949_1_1_1"/>
<dbReference type="InParanoid" id="P30566"/>
<dbReference type="OMA" id="VQENAMK"/>
<dbReference type="OrthoDB" id="406045at2759"/>
<dbReference type="PAN-GO" id="P30566">
    <property type="GO annotations" value="4 GO annotations based on evolutionary models"/>
</dbReference>
<dbReference type="PhylomeDB" id="P30566"/>
<dbReference type="TreeFam" id="TF106385"/>
<dbReference type="BioCyc" id="MetaCyc:HS02059-MONOMER"/>
<dbReference type="BRENDA" id="4.3.2.2">
    <property type="organism ID" value="2681"/>
</dbReference>
<dbReference type="PathwayCommons" id="P30566"/>
<dbReference type="Reactome" id="R-HSA-73817">
    <property type="pathway name" value="Purine ribonucleoside monophosphate biosynthesis"/>
</dbReference>
<dbReference type="SABIO-RK" id="P30566"/>
<dbReference type="SignaLink" id="P30566"/>
<dbReference type="SIGNOR" id="P30566"/>
<dbReference type="UniPathway" id="UPA00074">
    <property type="reaction ID" value="UER00132"/>
</dbReference>
<dbReference type="UniPathway" id="UPA00075">
    <property type="reaction ID" value="UER00336"/>
</dbReference>
<dbReference type="BioGRID-ORCS" id="158">
    <property type="hits" value="599 hits in 1167 CRISPR screens"/>
</dbReference>
<dbReference type="ChiTaRS" id="ADSL">
    <property type="organism name" value="human"/>
</dbReference>
<dbReference type="EvolutionaryTrace" id="P30566"/>
<dbReference type="GeneWiki" id="Adenylosuccinate_lyase"/>
<dbReference type="GenomeRNAi" id="158"/>
<dbReference type="Pharos" id="P30566">
    <property type="development level" value="Tbio"/>
</dbReference>
<dbReference type="PRO" id="PR:P30566"/>
<dbReference type="Proteomes" id="UP000005640">
    <property type="component" value="Chromosome 22"/>
</dbReference>
<dbReference type="RNAct" id="P30566">
    <property type="molecule type" value="protein"/>
</dbReference>
<dbReference type="Bgee" id="ENSG00000239900">
    <property type="expression patterns" value="Expressed in hindlimb stylopod muscle and 100 other cell types or tissues"/>
</dbReference>
<dbReference type="ExpressionAtlas" id="P30566">
    <property type="expression patterns" value="baseline and differential"/>
</dbReference>
<dbReference type="GO" id="GO:0005829">
    <property type="term" value="C:cytosol"/>
    <property type="evidence" value="ECO:0000314"/>
    <property type="project" value="HPA"/>
</dbReference>
<dbReference type="GO" id="GO:0032991">
    <property type="term" value="C:protein-containing complex"/>
    <property type="evidence" value="ECO:0000314"/>
    <property type="project" value="UniProtKB"/>
</dbReference>
<dbReference type="GO" id="GO:0070626">
    <property type="term" value="F:(S)-2-(5-amino-1-(5-phospho-D-ribosyl)imidazole-4-carboxamido) succinate lyase (fumarate-forming) activity"/>
    <property type="evidence" value="ECO:0000314"/>
    <property type="project" value="MGI"/>
</dbReference>
<dbReference type="GO" id="GO:0042802">
    <property type="term" value="F:identical protein binding"/>
    <property type="evidence" value="ECO:0000314"/>
    <property type="project" value="UniProtKB"/>
</dbReference>
<dbReference type="GO" id="GO:0004018">
    <property type="term" value="F:N6-(1,2-dicarboxyethyl)AMP AMP-lyase (fumarate-forming) activity"/>
    <property type="evidence" value="ECO:0000314"/>
    <property type="project" value="UniProtKB"/>
</dbReference>
<dbReference type="GO" id="GO:0044208">
    <property type="term" value="P:'de novo' AMP biosynthetic process"/>
    <property type="evidence" value="ECO:0000318"/>
    <property type="project" value="GO_Central"/>
</dbReference>
<dbReference type="GO" id="GO:0006189">
    <property type="term" value="P:'de novo' IMP biosynthetic process"/>
    <property type="evidence" value="ECO:0007669"/>
    <property type="project" value="UniProtKB-UniPathway"/>
</dbReference>
<dbReference type="GO" id="GO:0097294">
    <property type="term" value="P:'de novo' XMP biosynthetic process"/>
    <property type="evidence" value="ECO:0007669"/>
    <property type="project" value="Ensembl"/>
</dbReference>
<dbReference type="GO" id="GO:0009060">
    <property type="term" value="P:aerobic respiration"/>
    <property type="evidence" value="ECO:0007669"/>
    <property type="project" value="Ensembl"/>
</dbReference>
<dbReference type="GO" id="GO:0006167">
    <property type="term" value="P:AMP biosynthetic process"/>
    <property type="evidence" value="ECO:0000314"/>
    <property type="project" value="UniProtKB"/>
</dbReference>
<dbReference type="GO" id="GO:0044209">
    <property type="term" value="P:AMP salvage"/>
    <property type="evidence" value="ECO:0007669"/>
    <property type="project" value="Ensembl"/>
</dbReference>
<dbReference type="GO" id="GO:0006177">
    <property type="term" value="P:GMP biosynthetic process"/>
    <property type="evidence" value="ECO:0007669"/>
    <property type="project" value="Ensembl"/>
</dbReference>
<dbReference type="GO" id="GO:0006164">
    <property type="term" value="P:purine nucleotide biosynthetic process"/>
    <property type="evidence" value="ECO:0000305"/>
    <property type="project" value="UniProtKB"/>
</dbReference>
<dbReference type="GO" id="GO:0001666">
    <property type="term" value="P:response to hypoxia"/>
    <property type="evidence" value="ECO:0007669"/>
    <property type="project" value="Ensembl"/>
</dbReference>
<dbReference type="GO" id="GO:0014850">
    <property type="term" value="P:response to muscle activity"/>
    <property type="evidence" value="ECO:0007669"/>
    <property type="project" value="Ensembl"/>
</dbReference>
<dbReference type="GO" id="GO:0007584">
    <property type="term" value="P:response to nutrient"/>
    <property type="evidence" value="ECO:0007669"/>
    <property type="project" value="Ensembl"/>
</dbReference>
<dbReference type="GO" id="GO:0042594">
    <property type="term" value="P:response to starvation"/>
    <property type="evidence" value="ECO:0007669"/>
    <property type="project" value="Ensembl"/>
</dbReference>
<dbReference type="CDD" id="cd03302">
    <property type="entry name" value="Adenylsuccinate_lyase_2"/>
    <property type="match status" value="1"/>
</dbReference>
<dbReference type="FunFam" id="1.10.275.60:FF:000001">
    <property type="entry name" value="Adenylosuccinate lyase"/>
    <property type="match status" value="1"/>
</dbReference>
<dbReference type="FunFam" id="1.10.40.30:FF:000005">
    <property type="entry name" value="Adenylosuccinate lyase"/>
    <property type="match status" value="1"/>
</dbReference>
<dbReference type="Gene3D" id="1.10.275.60">
    <property type="match status" value="1"/>
</dbReference>
<dbReference type="Gene3D" id="1.10.40.30">
    <property type="entry name" value="Fumarase/aspartase (C-terminal domain)"/>
    <property type="match status" value="1"/>
</dbReference>
<dbReference type="Gene3D" id="1.20.200.10">
    <property type="entry name" value="Fumarase/aspartase (Central domain)"/>
    <property type="match status" value="1"/>
</dbReference>
<dbReference type="InterPro" id="IPR019468">
    <property type="entry name" value="AdenyloSucc_lyase_C"/>
</dbReference>
<dbReference type="InterPro" id="IPR020557">
    <property type="entry name" value="Fumarate_lyase_CS"/>
</dbReference>
<dbReference type="InterPro" id="IPR000362">
    <property type="entry name" value="Fumarate_lyase_fam"/>
</dbReference>
<dbReference type="InterPro" id="IPR022761">
    <property type="entry name" value="Fumarate_lyase_N"/>
</dbReference>
<dbReference type="InterPro" id="IPR008948">
    <property type="entry name" value="L-Aspartase-like"/>
</dbReference>
<dbReference type="InterPro" id="IPR004769">
    <property type="entry name" value="Pur_lyase"/>
</dbReference>
<dbReference type="NCBIfam" id="TIGR00928">
    <property type="entry name" value="purB"/>
    <property type="match status" value="1"/>
</dbReference>
<dbReference type="PANTHER" id="PTHR43172">
    <property type="entry name" value="ADENYLOSUCCINATE LYASE"/>
    <property type="match status" value="1"/>
</dbReference>
<dbReference type="PANTHER" id="PTHR43172:SF1">
    <property type="entry name" value="ADENYLOSUCCINATE LYASE"/>
    <property type="match status" value="1"/>
</dbReference>
<dbReference type="Pfam" id="PF10397">
    <property type="entry name" value="ADSL_C"/>
    <property type="match status" value="1"/>
</dbReference>
<dbReference type="Pfam" id="PF00206">
    <property type="entry name" value="Lyase_1"/>
    <property type="match status" value="1"/>
</dbReference>
<dbReference type="PRINTS" id="PR00145">
    <property type="entry name" value="ARGSUCLYASE"/>
</dbReference>
<dbReference type="PRINTS" id="PR00149">
    <property type="entry name" value="FUMRATELYASE"/>
</dbReference>
<dbReference type="SMART" id="SM00998">
    <property type="entry name" value="ADSL_C"/>
    <property type="match status" value="1"/>
</dbReference>
<dbReference type="SUPFAM" id="SSF48557">
    <property type="entry name" value="L-aspartase-like"/>
    <property type="match status" value="1"/>
</dbReference>
<dbReference type="PROSITE" id="PS00163">
    <property type="entry name" value="FUMARATE_LYASES"/>
    <property type="match status" value="1"/>
</dbReference>
<comment type="function">
    <text evidence="2">Catalyzes two non-sequential steps in de novo AMP synthesis: converts (S)-2-(5-amino-1-(5-phospho-D-ribosyl)imidazole-4-carboxamido)succinate (SAICAR) to fumarate plus 5-amino-1-(5-phospho-D-ribosyl)imidazole-4-carboxamide, and thereby also contributes to de novo IMP synthesis, and converts succinyladenosine monophosphate (SAMP) to AMP and fumarate.</text>
</comment>
<comment type="catalytic activity">
    <reaction evidence="10 12">
        <text>N(6)-(1,2-dicarboxyethyl)-AMP = fumarate + AMP</text>
        <dbReference type="Rhea" id="RHEA:16853"/>
        <dbReference type="ChEBI" id="CHEBI:29806"/>
        <dbReference type="ChEBI" id="CHEBI:57567"/>
        <dbReference type="ChEBI" id="CHEBI:456215"/>
        <dbReference type="EC" id="4.3.2.2"/>
    </reaction>
</comment>
<comment type="catalytic activity">
    <reaction evidence="10 12">
        <text>(2S)-2-[5-amino-1-(5-phospho-beta-D-ribosyl)imidazole-4-carboxamido]succinate = 5-amino-1-(5-phospho-beta-D-ribosyl)imidazole-4-carboxamide + fumarate</text>
        <dbReference type="Rhea" id="RHEA:23920"/>
        <dbReference type="ChEBI" id="CHEBI:29806"/>
        <dbReference type="ChEBI" id="CHEBI:58443"/>
        <dbReference type="ChEBI" id="CHEBI:58475"/>
        <dbReference type="EC" id="4.3.2.2"/>
    </reaction>
</comment>
<comment type="activity regulation">
    <text evidence="11 12">The enzyme reaction kinetics indicate cooperativity between subunits.</text>
</comment>
<comment type="pathway">
    <text>Purine metabolism; AMP biosynthesis via de novo pathway; AMP from IMP: step 2/2.</text>
</comment>
<comment type="pathway">
    <text>Purine metabolism; IMP biosynthesis via de novo pathway; 5-amino-1-(5-phospho-D-ribosyl)imidazole-4-carboxamide from 5-amino-1-(5-phospho-D-ribosyl)imidazole-4-carboxylate: step 2/2.</text>
</comment>
<comment type="subunit">
    <text evidence="10 12">Homotetramer. Residues from neighboring subunits contribute catalytic and substrate-binding residues to each active site.</text>
</comment>
<comment type="alternative products">
    <event type="alternative splicing"/>
    <isoform>
        <id>P30566-1</id>
        <name>1</name>
        <sequence type="displayed"/>
    </isoform>
    <isoform>
        <id>P30566-2</id>
        <name>2</name>
        <name>Delta-ADSL</name>
        <sequence type="described" ref="VSP_000318"/>
    </isoform>
</comment>
<comment type="tissue specificity">
    <text>Ubiquitously expressed. Both isoforms are produced by all tissues. Isoform 2 is 10-fold less abundant than isoform 1.</text>
</comment>
<comment type="disease" evidence="1 2 3 4 5 6 7 8 9 11 12 13 14">
    <disease id="DI-00040">
        <name>Adenylosuccinase deficiency</name>
        <acronym>ADSLD</acronym>
        <description>An autosomal recessive disorder characterized by the accumulation in the body fluids of succinylaminoimidazole-carboxamide riboside (SAICA-riboside) and succinyladenosine (S-Ado). Most children display marked psychomotor delay, often accompanied by epilepsy or autistic features, or both, although some patients may be less profoundly retarded. Occasionally, growth retardation and muscular wasting are also present.</description>
        <dbReference type="MIM" id="103050"/>
    </disease>
    <text>The disease is caused by variants affecting the gene represented in this entry.</text>
</comment>
<comment type="miscellaneous">
    <molecule>Isoform 2</molecule>
    <text evidence="20">Lacks enzymatic activity.</text>
</comment>
<comment type="similarity">
    <text evidence="20">Belongs to the lyase 1 family. Adenylosuccinate lyase subfamily.</text>
</comment>
<comment type="sequence caution" evidence="20">
    <conflict type="erroneous initiation">
        <sequence resource="EMBL-CDS" id="AAC60603"/>
    </conflict>
    <text>Truncated N-terminus.</text>
</comment>
<comment type="sequence caution" evidence="20">
    <conflict type="erroneous initiation">
        <sequence resource="EMBL-CDS" id="CAA46697"/>
    </conflict>
    <text>Truncated N-terminus.</text>
</comment>
<accession>P30566</accession>
<accession>B0QY76</accession>
<accession>O75495</accession>
<accession>Q5TI34</accession>
<gene>
    <name type="primary">ADSL</name>
    <name type="synonym">AMPS</name>
</gene>
<name>PUR8_HUMAN</name>
<organism>
    <name type="scientific">Homo sapiens</name>
    <name type="common">Human</name>
    <dbReference type="NCBI Taxonomy" id="9606"/>
    <lineage>
        <taxon>Eukaryota</taxon>
        <taxon>Metazoa</taxon>
        <taxon>Chordata</taxon>
        <taxon>Craniata</taxon>
        <taxon>Vertebrata</taxon>
        <taxon>Euteleostomi</taxon>
        <taxon>Mammalia</taxon>
        <taxon>Eutheria</taxon>
        <taxon>Euarchontoglires</taxon>
        <taxon>Primates</taxon>
        <taxon>Haplorrhini</taxon>
        <taxon>Catarrhini</taxon>
        <taxon>Hominidae</taxon>
        <taxon>Homo</taxon>
    </lineage>
</organism>
<evidence type="ECO:0000269" key="1">
    <source>
    </source>
</evidence>
<evidence type="ECO:0000269" key="2">
    <source>
    </source>
</evidence>
<evidence type="ECO:0000269" key="3">
    <source>
    </source>
</evidence>
<evidence type="ECO:0000269" key="4">
    <source>
    </source>
</evidence>
<evidence type="ECO:0000269" key="5">
    <source>
    </source>
</evidence>
<evidence type="ECO:0000269" key="6">
    <source>
    </source>
</evidence>
<evidence type="ECO:0000269" key="7">
    <source>
    </source>
</evidence>
<evidence type="ECO:0000269" key="8">
    <source>
    </source>
</evidence>
<evidence type="ECO:0000269" key="9">
    <source>
    </source>
</evidence>
<evidence type="ECO:0000269" key="10">
    <source>
    </source>
</evidence>
<evidence type="ECO:0000269" key="11">
    <source>
    </source>
</evidence>
<evidence type="ECO:0000269" key="12">
    <source>
    </source>
</evidence>
<evidence type="ECO:0000269" key="13">
    <source>
    </source>
</evidence>
<evidence type="ECO:0000269" key="14">
    <source>
    </source>
</evidence>
<evidence type="ECO:0000269" key="15">
    <source ref="8"/>
</evidence>
<evidence type="ECO:0000303" key="16">
    <source>
    </source>
</evidence>
<evidence type="ECO:0000303" key="17">
    <source>
    </source>
</evidence>
<evidence type="ECO:0000303" key="18">
    <source>
    </source>
</evidence>
<evidence type="ECO:0000303" key="19">
    <source>
    </source>
</evidence>
<evidence type="ECO:0000305" key="20"/>
<evidence type="ECO:0007744" key="21">
    <source>
    </source>
</evidence>
<evidence type="ECO:0007744" key="22">
    <source>
    </source>
</evidence>
<evidence type="ECO:0007829" key="23">
    <source>
        <dbReference type="PDB" id="2J91"/>
    </source>
</evidence>
<evidence type="ECO:0007829" key="24">
    <source>
        <dbReference type="PDB" id="4FFX"/>
    </source>
</evidence>
<evidence type="ECO:0007829" key="25">
    <source>
        <dbReference type="PDB" id="4FLC"/>
    </source>
</evidence>
<sequence>MAAGGDHGSPDSYRSPLASRYASPEMCFVFSDRYKFRTWRQLWLWLAEAEQTLGLPITDEQIQEMKSNLENIDFKMAAEEEKRLRHDVMAHVHTFGHCCPKAAGIIHLGATSCYVGDNTDLIILRNALDLLLPKLARVISRLADFAKERASLPTLGFTHFQPAQLTTVGKRCCLWIQDLCMDLQNLKRVRDDLRFRGVKGTTGTQASFLQLFEGDDHKVEQLDKMVTEKAGFKRAFIITGQTYTRKVDIEVLSVLASLGASVHKICTDIRLLANLKEMEEPFEKQQIGSSAMPYKRNPMRSERCCSLARHLMTLVMDPLQTASVQWFERTLDDSANRRICLAEAFLTADTILNTLQNISEGLVVYPKVIERRIRQELPFMATENIIMAMVKAGGSRQDCHEKIRVLSQQAASVVKQEGGDNDLIERIQVDAYFSPIHSQLDHLLDPSSFTGRASQQVQRFLEEEVYPLLKPYESVMKVKAELCL</sequence>
<feature type="initiator methionine" description="Removed" evidence="15">
    <location>
        <position position="1"/>
    </location>
</feature>
<feature type="chain" id="PRO_0000137892" description="Adenylosuccinate lyase">
    <location>
        <begin position="2"/>
        <end position="484"/>
    </location>
</feature>
<feature type="active site" description="Proton donor/acceptor" evidence="12">
    <location>
        <position position="159"/>
    </location>
</feature>
<feature type="active site" description="Proton donor/acceptor" evidence="12">
    <location>
        <position position="289"/>
    </location>
</feature>
<feature type="binding site">
    <location>
        <begin position="20"/>
        <end position="21"/>
    </location>
    <ligand>
        <name>substrate</name>
        <note>ligand shared between two neighboring subunits</note>
    </ligand>
</feature>
<feature type="binding site" description="in other chain">
    <location>
        <begin position="85"/>
        <end position="87"/>
    </location>
    <ligand>
        <name>substrate</name>
        <note>ligand shared between two neighboring subunits</note>
    </ligand>
</feature>
<feature type="binding site" description="in other chain">
    <location>
        <begin position="111"/>
        <end position="112"/>
    </location>
    <ligand>
        <name>substrate</name>
        <note>ligand shared between two neighboring subunits</note>
    </ligand>
</feature>
<feature type="binding site" description="in other chain">
    <location>
        <position position="241"/>
    </location>
    <ligand>
        <name>substrate</name>
        <note>ligand shared between two neighboring subunits</note>
    </ligand>
</feature>
<feature type="binding site">
    <location>
        <position position="303"/>
    </location>
    <ligand>
        <name>substrate</name>
        <note>ligand shared between two neighboring subunits</note>
    </ligand>
</feature>
<feature type="binding site" description="in other chain">
    <location>
        <position position="329"/>
    </location>
    <ligand>
        <name>substrate</name>
        <note>ligand shared between two neighboring subunits</note>
    </ligand>
</feature>
<feature type="binding site" description="in other chain">
    <location>
        <position position="334"/>
    </location>
    <ligand>
        <name>substrate</name>
        <note>ligand shared between two neighboring subunits</note>
    </ligand>
</feature>
<feature type="binding site" description="in other chain">
    <location>
        <position position="338"/>
    </location>
    <ligand>
        <name>substrate</name>
        <note>ligand shared between two neighboring subunits</note>
    </ligand>
</feature>
<feature type="modified residue" description="N-acetylalanine" evidence="15">
    <location>
        <position position="2"/>
    </location>
</feature>
<feature type="modified residue" description="N6-acetyllysine" evidence="21">
    <location>
        <position position="147"/>
    </location>
</feature>
<feature type="modified residue" description="N6-acetyllysine" evidence="21">
    <location>
        <position position="295"/>
    </location>
</feature>
<feature type="cross-link" description="Glycyl lysine isopeptide (Lys-Gly) (interchain with G-Cter in SUMO1)" evidence="22">
    <location>
        <position position="415"/>
    </location>
</feature>
<feature type="splice variant" id="VSP_000318" description="In isoform 2." evidence="16 17">
    <location>
        <begin position="398"/>
        <end position="456"/>
    </location>
</feature>
<feature type="sequence variant" id="VAR_016930" description="In ADSLD; severe; dbSNP:rs143083947." evidence="3">
    <original>A</original>
    <variation>V</variation>
    <location>
        <position position="2"/>
    </location>
</feature>
<feature type="sequence variant" id="VAR_017078" description="In ADSLD; severe." evidence="2">
    <original>A</original>
    <variation>V</variation>
    <location>
        <position position="3"/>
    </location>
</feature>
<feature type="sequence variant" id="VAR_016931" description="In ADSLD; severe; dbSNP:rs1311171245." evidence="3">
    <original>M</original>
    <variation>L</variation>
    <location>
        <position position="26"/>
    </location>
</feature>
<feature type="sequence variant" id="VAR_037883" description="In dbSNP:rs5757921.">
    <original>S</original>
    <variation>N</variation>
    <location>
        <position position="31"/>
    </location>
</feature>
<feature type="sequence variant" id="VAR_007972" description="In ADSLD; severe." evidence="1">
    <original>I</original>
    <variation>V</variation>
    <location>
        <position position="72"/>
    </location>
</feature>
<feature type="sequence variant" id="VAR_017079" description="In ADSLD; moderate; dbSNP:rs119450942." evidence="14">
    <original>P</original>
    <variation>A</variation>
    <location>
        <position position="100"/>
    </location>
</feature>
<feature type="sequence variant" id="VAR_017080" description="In ADSLD; severe; total loss of activity; dbSNP:rs374259530." evidence="2">
    <original>Y</original>
    <variation>H</variation>
    <location>
        <position position="114"/>
    </location>
</feature>
<feature type="sequence variant" id="VAR_007973" description="In ADSLD; severe; dbSNP:rs756210458." evidence="1 3">
    <original>R</original>
    <variation>W</variation>
    <location>
        <position position="141"/>
    </location>
</feature>
<feature type="sequence variant" id="VAR_037884" description="In dbSNP:rs11089991.">
    <original>K</original>
    <variation>M</variation>
    <location>
        <position position="147"/>
    </location>
</feature>
<feature type="sequence variant" id="VAR_007974" description="In ADSLD; moderate; dbSNP:rs28941471." evidence="1 2">
    <original>R</original>
    <variation>Q</variation>
    <location>
        <position position="190"/>
    </location>
</feature>
<feature type="sequence variant" id="VAR_017081" description="In ADSLD; severe; reduces protein stability; dbSNP:rs1465152683." evidence="2 11">
    <original>R</original>
    <variation>C</variation>
    <location>
        <position position="194"/>
    </location>
</feature>
<feature type="sequence variant" id="VAR_007975" description="In ADSLD; moderate; strongly reduced catalytic activity; dbSNP:rs119450944." evidence="1 11">
    <original>K</original>
    <variation>E</variation>
    <location>
        <position position="246"/>
    </location>
</feature>
<feature type="sequence variant" id="VAR_017082" description="In ADSLD; severe; total loss of activity; dbSNP:rs746501563." evidence="2">
    <original>D</original>
    <variation>N</variation>
    <location>
        <position position="268"/>
    </location>
</feature>
<feature type="sequence variant" id="VAR_007976" description="In ADSLD; mild; strongly reduced activity with SAMP, but only slightly reduced activity with SAICAR; abolishes cooperativity; dbSNP:rs373458753." evidence="1 3 12">
    <original>R</original>
    <variation>C</variation>
    <location>
        <position position="303"/>
    </location>
</feature>
<feature type="sequence variant" id="VAR_017083" description="In ADSLD; severe; slightly reduced enzyme activity; dbSNP:rs2044791112." evidence="6 11">
    <original>L</original>
    <variation>V</variation>
    <location>
        <position position="311"/>
    </location>
</feature>
<feature type="sequence variant" id="VAR_017084" description="In ADSLD; severe; dbSNP:rs202064195." evidence="4">
    <original>P</original>
    <variation>L</variation>
    <location>
        <position position="318"/>
    </location>
</feature>
<feature type="sequence variant" id="VAR_017085" description="In ADSLD; severe; dbSNP:rs370851726." evidence="6">
    <original>V</original>
    <variation>M</variation>
    <location>
        <position position="364"/>
    </location>
</feature>
<feature type="sequence variant" id="VAR_017086" description="In ADSLD; severe; dbSNP:rs376533026." evidence="5">
    <original>R</original>
    <variation>W</variation>
    <location>
        <position position="374"/>
    </location>
</feature>
<feature type="sequence variant" id="VAR_007977" description="In ADSLD; severe." evidence="1 3">
    <original>S</original>
    <variation>R</variation>
    <location>
        <position position="395"/>
    </location>
</feature>
<feature type="sequence variant" id="VAR_017087" description="In ADSLD; severe; abolishes cooperativity and reduces enzyme activity; dbSNP:rs755492501." evidence="11">
    <original>R</original>
    <variation>C</variation>
    <location>
        <position position="396"/>
    </location>
</feature>
<feature type="sequence variant" id="VAR_017088" description="In ADSLD; severe; abolishes cooperativity and reduces enzyme activity; dbSNP:rs763542069." evidence="6 11">
    <original>R</original>
    <variation>H</variation>
    <location>
        <position position="396"/>
    </location>
</feature>
<feature type="sequence variant" id="VAR_017089" description="In ADSLD; moderate; dbSNP:rs119450943." evidence="14">
    <original>D</original>
    <variation>Y</variation>
    <location>
        <position position="422"/>
    </location>
</feature>
<feature type="sequence variant" id="VAR_017090" description="In ADSLD; moderate." evidence="9">
    <original>L</original>
    <variation>V</variation>
    <location>
        <position position="423"/>
    </location>
</feature>
<feature type="sequence variant" id="VAR_007978" description="In ADSLD; severe; most frequent mutation; dbSNP:rs119450941." evidence="1 2 3 7 13">
    <original>R</original>
    <variation>H</variation>
    <location>
        <position position="426"/>
    </location>
</feature>
<feature type="sequence variant" id="VAR_017091" description="In ADSLD; mild; dbSNP:rs554254383." evidence="2">
    <original>D</original>
    <variation>N</variation>
    <location>
        <position position="430"/>
    </location>
</feature>
<feature type="sequence variant" id="VAR_000680" description="In ADSLD; severe; dbSNP:rs119450940." evidence="8">
    <original>S</original>
    <variation>P</variation>
    <location>
        <position position="438"/>
    </location>
</feature>
<feature type="sequence variant" id="VAR_017092" description="In ADSLD; severe; dbSNP:rs777821034." evidence="4">
    <original>S</original>
    <variation>P</variation>
    <location>
        <position position="447"/>
    </location>
</feature>
<feature type="sequence variant" id="VAR_016932" description="In ADSLD; moderate; dbSNP:rs372895468." evidence="3">
    <original>T</original>
    <variation>S</variation>
    <location>
        <position position="450"/>
    </location>
</feature>
<feature type="sequence variant" id="VAR_017093" description="In ADSLD; severe; dbSNP:rs775671027." evidence="6">
    <original>R</original>
    <variation>P</variation>
    <location>
        <position position="452"/>
    </location>
</feature>
<feature type="helix" evidence="23">
    <location>
        <begin position="16"/>
        <end position="19"/>
    </location>
</feature>
<feature type="helix" evidence="23">
    <location>
        <begin position="24"/>
        <end position="29"/>
    </location>
</feature>
<feature type="helix" evidence="23">
    <location>
        <begin position="32"/>
        <end position="53"/>
    </location>
</feature>
<feature type="helix" evidence="23">
    <location>
        <begin position="59"/>
        <end position="66"/>
    </location>
</feature>
<feature type="strand" evidence="24">
    <location>
        <begin position="68"/>
        <end position="70"/>
    </location>
</feature>
<feature type="helix" evidence="23">
    <location>
        <begin position="74"/>
        <end position="84"/>
    </location>
</feature>
<feature type="helix" evidence="23">
    <location>
        <begin position="87"/>
        <end position="98"/>
    </location>
</feature>
<feature type="turn" evidence="23">
    <location>
        <begin position="100"/>
        <end position="102"/>
    </location>
</feature>
<feature type="helix" evidence="23">
    <location>
        <begin position="103"/>
        <end position="105"/>
    </location>
</feature>
<feature type="turn" evidence="23">
    <location>
        <begin position="106"/>
        <end position="109"/>
    </location>
</feature>
<feature type="helix" evidence="23">
    <location>
        <begin position="113"/>
        <end position="148"/>
    </location>
</feature>
<feature type="turn" evidence="23">
    <location>
        <begin position="149"/>
        <end position="151"/>
    </location>
</feature>
<feature type="strand" evidence="23">
    <location>
        <begin position="153"/>
        <end position="158"/>
    </location>
</feature>
<feature type="strand" evidence="23">
    <location>
        <begin position="161"/>
        <end position="167"/>
    </location>
</feature>
<feature type="helix" evidence="23">
    <location>
        <begin position="168"/>
        <end position="192"/>
    </location>
</feature>
<feature type="strand" evidence="25">
    <location>
        <begin position="201"/>
        <end position="204"/>
    </location>
</feature>
<feature type="helix" evidence="23">
    <location>
        <begin position="206"/>
        <end position="211"/>
    </location>
</feature>
<feature type="turn" evidence="23">
    <location>
        <begin position="212"/>
        <end position="214"/>
    </location>
</feature>
<feature type="helix" evidence="23">
    <location>
        <begin position="216"/>
        <end position="229"/>
    </location>
</feature>
<feature type="strand" evidence="23">
    <location>
        <begin position="240"/>
        <end position="242"/>
    </location>
</feature>
<feature type="helix" evidence="23">
    <location>
        <begin position="246"/>
        <end position="274"/>
    </location>
</feature>
<feature type="strand" evidence="23">
    <location>
        <begin position="277"/>
        <end position="279"/>
    </location>
</feature>
<feature type="helix" evidence="23">
    <location>
        <begin position="299"/>
        <end position="313"/>
    </location>
</feature>
<feature type="helix" evidence="23">
    <location>
        <begin position="316"/>
        <end position="323"/>
    </location>
</feature>
<feature type="helix" evidence="23">
    <location>
        <begin position="331"/>
        <end position="333"/>
    </location>
</feature>
<feature type="helix" evidence="23">
    <location>
        <begin position="334"/>
        <end position="360"/>
    </location>
</feature>
<feature type="helix" evidence="23">
    <location>
        <begin position="366"/>
        <end position="380"/>
    </location>
</feature>
<feature type="helix" evidence="23">
    <location>
        <begin position="382"/>
        <end position="389"/>
    </location>
</feature>
<feature type="turn" evidence="25">
    <location>
        <begin position="391"/>
        <end position="393"/>
    </location>
</feature>
<feature type="helix" evidence="23">
    <location>
        <begin position="396"/>
        <end position="416"/>
    </location>
</feature>
<feature type="helix" evidence="23">
    <location>
        <begin position="423"/>
        <end position="429"/>
    </location>
</feature>
<feature type="helix" evidence="23">
    <location>
        <begin position="431"/>
        <end position="433"/>
    </location>
</feature>
<feature type="helix" evidence="23">
    <location>
        <begin position="434"/>
        <end position="437"/>
    </location>
</feature>
<feature type="helix" evidence="23">
    <location>
        <begin position="440"/>
        <end position="443"/>
    </location>
</feature>
<feature type="helix" evidence="23">
    <location>
        <begin position="446"/>
        <end position="449"/>
    </location>
</feature>
<feature type="helix" evidence="23">
    <location>
        <begin position="453"/>
        <end position="463"/>
    </location>
</feature>
<feature type="helix" evidence="23">
    <location>
        <begin position="465"/>
        <end position="469"/>
    </location>
</feature>
<feature type="helix" evidence="23">
    <location>
        <begin position="470"/>
        <end position="472"/>
    </location>
</feature>